<sequence>MLEVSNLTAIRDERVLFENLQFEIKPGELVQIEGRNGTGKTTLLRIVTGLGDRDEGAIKWKGEAIEKSRDQFHQDLLFLGHQTGVKRELTAFENLRFYQSIHNSDSSSERIFHALTQVGLAGREDVPVAQLSAGQQRRVALARLWLSHQILWILDEPLTAIDKQGVKVLESLFSNHVDNGGIVILTTHQDMFTDSPKLRKIKLGD</sequence>
<organism>
    <name type="scientific">Vibrio vulnificus (strain CMCP6)</name>
    <dbReference type="NCBI Taxonomy" id="216895"/>
    <lineage>
        <taxon>Bacteria</taxon>
        <taxon>Pseudomonadati</taxon>
        <taxon>Pseudomonadota</taxon>
        <taxon>Gammaproteobacteria</taxon>
        <taxon>Vibrionales</taxon>
        <taxon>Vibrionaceae</taxon>
        <taxon>Vibrio</taxon>
    </lineage>
</organism>
<keyword id="KW-0067">ATP-binding</keyword>
<keyword id="KW-0997">Cell inner membrane</keyword>
<keyword id="KW-1003">Cell membrane</keyword>
<keyword id="KW-0201">Cytochrome c-type biogenesis</keyword>
<keyword id="KW-0472">Membrane</keyword>
<keyword id="KW-0547">Nucleotide-binding</keyword>
<keyword id="KW-1278">Translocase</keyword>
<keyword id="KW-0813">Transport</keyword>
<evidence type="ECO:0000255" key="1">
    <source>
        <dbReference type="HAMAP-Rule" id="MF_01707"/>
    </source>
</evidence>
<accession>Q8DB62</accession>
<name>CCMA_VIBVU</name>
<feature type="chain" id="PRO_0000092219" description="Cytochrome c biogenesis ATP-binding export protein CcmA">
    <location>
        <begin position="1"/>
        <end position="205"/>
    </location>
</feature>
<feature type="domain" description="ABC transporter" evidence="1">
    <location>
        <begin position="2"/>
        <end position="204"/>
    </location>
</feature>
<feature type="binding site" evidence="1">
    <location>
        <begin position="34"/>
        <end position="41"/>
    </location>
    <ligand>
        <name>ATP</name>
        <dbReference type="ChEBI" id="CHEBI:30616"/>
    </ligand>
</feature>
<gene>
    <name evidence="1" type="primary">ccmA</name>
    <name type="ordered locus">VV1_1961</name>
</gene>
<reference key="1">
    <citation type="submission" date="2002-12" db="EMBL/GenBank/DDBJ databases">
        <title>Complete genome sequence of Vibrio vulnificus CMCP6.</title>
        <authorList>
            <person name="Rhee J.H."/>
            <person name="Kim S.Y."/>
            <person name="Chung S.S."/>
            <person name="Kim J.J."/>
            <person name="Moon Y.H."/>
            <person name="Jeong H."/>
            <person name="Choy H.E."/>
        </authorList>
    </citation>
    <scope>NUCLEOTIDE SEQUENCE [LARGE SCALE GENOMIC DNA]</scope>
    <source>
        <strain>CMCP6</strain>
    </source>
</reference>
<comment type="function">
    <text evidence="1">Part of the ABC transporter complex CcmAB involved in the biogenesis of c-type cytochromes; once thought to export heme, this seems not to be the case, but its exact role is uncertain. Responsible for energy coupling to the transport system.</text>
</comment>
<comment type="catalytic activity">
    <reaction evidence="1">
        <text>heme b(in) + ATP + H2O = heme b(out) + ADP + phosphate + H(+)</text>
        <dbReference type="Rhea" id="RHEA:19261"/>
        <dbReference type="ChEBI" id="CHEBI:15377"/>
        <dbReference type="ChEBI" id="CHEBI:15378"/>
        <dbReference type="ChEBI" id="CHEBI:30616"/>
        <dbReference type="ChEBI" id="CHEBI:43474"/>
        <dbReference type="ChEBI" id="CHEBI:60344"/>
        <dbReference type="ChEBI" id="CHEBI:456216"/>
        <dbReference type="EC" id="7.6.2.5"/>
    </reaction>
</comment>
<comment type="subunit">
    <text evidence="1">The complex is composed of two ATP-binding proteins (CcmA) and two transmembrane proteins (CcmB).</text>
</comment>
<comment type="subcellular location">
    <subcellularLocation>
        <location evidence="1">Cell inner membrane</location>
        <topology evidence="1">Peripheral membrane protein</topology>
    </subcellularLocation>
</comment>
<comment type="similarity">
    <text evidence="1">Belongs to the ABC transporter superfamily. CcmA exporter (TC 3.A.1.107) family.</text>
</comment>
<dbReference type="EC" id="7.6.2.5" evidence="1"/>
<dbReference type="EMBL" id="AE016795">
    <property type="protein sequence ID" value="AAO10361.1"/>
    <property type="molecule type" value="Genomic_DNA"/>
</dbReference>
<dbReference type="RefSeq" id="WP_011079860.1">
    <property type="nucleotide sequence ID" value="NC_004459.3"/>
</dbReference>
<dbReference type="SMR" id="Q8DB62"/>
<dbReference type="KEGG" id="vvu:VV1_1961"/>
<dbReference type="HOGENOM" id="CLU_000604_1_2_6"/>
<dbReference type="Proteomes" id="UP000002275">
    <property type="component" value="Chromosome 1"/>
</dbReference>
<dbReference type="GO" id="GO:0005886">
    <property type="term" value="C:plasma membrane"/>
    <property type="evidence" value="ECO:0007669"/>
    <property type="project" value="UniProtKB-SubCell"/>
</dbReference>
<dbReference type="GO" id="GO:0015439">
    <property type="term" value="F:ABC-type heme transporter activity"/>
    <property type="evidence" value="ECO:0007669"/>
    <property type="project" value="UniProtKB-EC"/>
</dbReference>
<dbReference type="GO" id="GO:0005524">
    <property type="term" value="F:ATP binding"/>
    <property type="evidence" value="ECO:0007669"/>
    <property type="project" value="UniProtKB-KW"/>
</dbReference>
<dbReference type="GO" id="GO:0016887">
    <property type="term" value="F:ATP hydrolysis activity"/>
    <property type="evidence" value="ECO:0007669"/>
    <property type="project" value="InterPro"/>
</dbReference>
<dbReference type="GO" id="GO:0017004">
    <property type="term" value="P:cytochrome complex assembly"/>
    <property type="evidence" value="ECO:0007669"/>
    <property type="project" value="UniProtKB-KW"/>
</dbReference>
<dbReference type="Gene3D" id="3.40.50.300">
    <property type="entry name" value="P-loop containing nucleotide triphosphate hydrolases"/>
    <property type="match status" value="1"/>
</dbReference>
<dbReference type="InterPro" id="IPR003593">
    <property type="entry name" value="AAA+_ATPase"/>
</dbReference>
<dbReference type="InterPro" id="IPR003439">
    <property type="entry name" value="ABC_transporter-like_ATP-bd"/>
</dbReference>
<dbReference type="InterPro" id="IPR017871">
    <property type="entry name" value="ABC_transporter-like_CS"/>
</dbReference>
<dbReference type="InterPro" id="IPR005895">
    <property type="entry name" value="ABC_transptr_haem_export_CcmA"/>
</dbReference>
<dbReference type="InterPro" id="IPR027417">
    <property type="entry name" value="P-loop_NTPase"/>
</dbReference>
<dbReference type="NCBIfam" id="TIGR01189">
    <property type="entry name" value="ccmA"/>
    <property type="match status" value="1"/>
</dbReference>
<dbReference type="NCBIfam" id="NF010061">
    <property type="entry name" value="PRK13538.1"/>
    <property type="match status" value="1"/>
</dbReference>
<dbReference type="PANTHER" id="PTHR43499">
    <property type="entry name" value="ABC TRANSPORTER I FAMILY MEMBER 1"/>
    <property type="match status" value="1"/>
</dbReference>
<dbReference type="PANTHER" id="PTHR43499:SF1">
    <property type="entry name" value="ABC TRANSPORTER I FAMILY MEMBER 1"/>
    <property type="match status" value="1"/>
</dbReference>
<dbReference type="Pfam" id="PF00005">
    <property type="entry name" value="ABC_tran"/>
    <property type="match status" value="1"/>
</dbReference>
<dbReference type="SMART" id="SM00382">
    <property type="entry name" value="AAA"/>
    <property type="match status" value="1"/>
</dbReference>
<dbReference type="SUPFAM" id="SSF52540">
    <property type="entry name" value="P-loop containing nucleoside triphosphate hydrolases"/>
    <property type="match status" value="1"/>
</dbReference>
<dbReference type="PROSITE" id="PS00211">
    <property type="entry name" value="ABC_TRANSPORTER_1"/>
    <property type="match status" value="1"/>
</dbReference>
<dbReference type="PROSITE" id="PS50893">
    <property type="entry name" value="ABC_TRANSPORTER_2"/>
    <property type="match status" value="1"/>
</dbReference>
<dbReference type="PROSITE" id="PS51243">
    <property type="entry name" value="CCMA"/>
    <property type="match status" value="1"/>
</dbReference>
<proteinExistence type="inferred from homology"/>
<protein>
    <recommendedName>
        <fullName evidence="1">Cytochrome c biogenesis ATP-binding export protein CcmA</fullName>
        <ecNumber evidence="1">7.6.2.5</ecNumber>
    </recommendedName>
    <alternativeName>
        <fullName evidence="1">Heme exporter protein A</fullName>
    </alternativeName>
</protein>